<comment type="function">
    <text evidence="2">Activates expression of the shikimate transporter ShiA in the presence of shikimate (PubMed:25406451). Binds to the shiA promoter region (PubMed:25406451).</text>
</comment>
<comment type="similarity">
    <text evidence="4">Belongs to the LysR transcriptional regulatory family.</text>
</comment>
<keyword id="KW-0010">Activator</keyword>
<keyword id="KW-0238">DNA-binding</keyword>
<keyword id="KW-0804">Transcription</keyword>
<keyword id="KW-0805">Transcription regulation</keyword>
<feature type="chain" id="PRO_0000456461" description="HTH-type transcriptional regulator ShiR">
    <location>
        <begin position="1"/>
        <end position="295"/>
    </location>
</feature>
<feature type="domain" description="HTH lysR-type" evidence="1">
    <location>
        <begin position="1"/>
        <end position="58"/>
    </location>
</feature>
<feature type="DNA-binding region" description="H-T-H motif" evidence="1">
    <location>
        <begin position="18"/>
        <end position="37"/>
    </location>
</feature>
<evidence type="ECO:0000255" key="1">
    <source>
        <dbReference type="PROSITE-ProRule" id="PRU00253"/>
    </source>
</evidence>
<evidence type="ECO:0000269" key="2">
    <source>
    </source>
</evidence>
<evidence type="ECO:0000303" key="3">
    <source>
    </source>
</evidence>
<evidence type="ECO:0000305" key="4"/>
<evidence type="ECO:0000312" key="5">
    <source>
        <dbReference type="EMBL" id="BAF55535.1"/>
    </source>
</evidence>
<gene>
    <name evidence="3" type="primary">shiR</name>
    <name evidence="5" type="ordered locus">cgR_2524</name>
</gene>
<accession>A4QH19</accession>
<proteinExistence type="evidence at protein level"/>
<reference key="1">
    <citation type="journal article" date="2007" name="Microbiology">
        <title>Comparative analysis of the Corynebacterium glutamicum group and complete genome sequence of strain R.</title>
        <authorList>
            <person name="Yukawa H."/>
            <person name="Omumasaba C.A."/>
            <person name="Nonaka H."/>
            <person name="Kos P."/>
            <person name="Okai N."/>
            <person name="Suzuki N."/>
            <person name="Suda M."/>
            <person name="Tsuge Y."/>
            <person name="Watanabe J."/>
            <person name="Ikeda Y."/>
            <person name="Vertes A.A."/>
            <person name="Inui M."/>
        </authorList>
    </citation>
    <scope>NUCLEOTIDE SEQUENCE [LARGE SCALE GENOMIC DNA]</scope>
    <source>
        <strain>R</strain>
    </source>
</reference>
<reference key="2">
    <citation type="journal article" date="2015" name="Microbiology">
        <title>Identification and expression analysis of a gene encoding a shikimate transporter of Corynebacterium glutamicum.</title>
        <authorList>
            <person name="Kubota T."/>
            <person name="Tanaka Y."/>
            <person name="Takemoto N."/>
            <person name="Hiraga K."/>
            <person name="Yukawa H."/>
            <person name="Inui M."/>
        </authorList>
    </citation>
    <scope>FUNCTION</scope>
    <scope>DNA-BINDING</scope>
    <source>
        <strain>R</strain>
    </source>
</reference>
<protein>
    <recommendedName>
        <fullName evidence="4">HTH-type transcriptional regulator ShiR</fullName>
    </recommendedName>
</protein>
<dbReference type="EMBL" id="AP009044">
    <property type="protein sequence ID" value="BAF55535.1"/>
    <property type="molecule type" value="Genomic_DNA"/>
</dbReference>
<dbReference type="RefSeq" id="WP_003863076.1">
    <property type="nucleotide sequence ID" value="NC_009342.1"/>
</dbReference>
<dbReference type="SMR" id="A4QH19"/>
<dbReference type="KEGG" id="cgt:cgR_2524"/>
<dbReference type="HOGENOM" id="CLU_039613_6_4_11"/>
<dbReference type="PhylomeDB" id="A4QH19"/>
<dbReference type="Proteomes" id="UP000006698">
    <property type="component" value="Chromosome"/>
</dbReference>
<dbReference type="GO" id="GO:0032993">
    <property type="term" value="C:protein-DNA complex"/>
    <property type="evidence" value="ECO:0007669"/>
    <property type="project" value="TreeGrafter"/>
</dbReference>
<dbReference type="GO" id="GO:0003677">
    <property type="term" value="F:DNA binding"/>
    <property type="evidence" value="ECO:0007669"/>
    <property type="project" value="UniProtKB-KW"/>
</dbReference>
<dbReference type="GO" id="GO:0003700">
    <property type="term" value="F:DNA-binding transcription factor activity"/>
    <property type="evidence" value="ECO:0007669"/>
    <property type="project" value="InterPro"/>
</dbReference>
<dbReference type="CDD" id="cd08414">
    <property type="entry name" value="PBP2_LTTR_aromatics_like"/>
    <property type="match status" value="1"/>
</dbReference>
<dbReference type="FunFam" id="1.10.10.10:FF:000001">
    <property type="entry name" value="LysR family transcriptional regulator"/>
    <property type="match status" value="1"/>
</dbReference>
<dbReference type="Gene3D" id="3.40.190.10">
    <property type="entry name" value="Periplasmic binding protein-like II"/>
    <property type="match status" value="2"/>
</dbReference>
<dbReference type="Gene3D" id="1.10.10.10">
    <property type="entry name" value="Winged helix-like DNA-binding domain superfamily/Winged helix DNA-binding domain"/>
    <property type="match status" value="1"/>
</dbReference>
<dbReference type="InterPro" id="IPR005119">
    <property type="entry name" value="LysR_subst-bd"/>
</dbReference>
<dbReference type="InterPro" id="IPR000847">
    <property type="entry name" value="Tscrpt_reg_HTH_LysR"/>
</dbReference>
<dbReference type="InterPro" id="IPR036388">
    <property type="entry name" value="WH-like_DNA-bd_sf"/>
</dbReference>
<dbReference type="InterPro" id="IPR036390">
    <property type="entry name" value="WH_DNA-bd_sf"/>
</dbReference>
<dbReference type="PANTHER" id="PTHR30346:SF0">
    <property type="entry name" value="HCA OPERON TRANSCRIPTIONAL ACTIVATOR HCAR"/>
    <property type="match status" value="1"/>
</dbReference>
<dbReference type="PANTHER" id="PTHR30346">
    <property type="entry name" value="TRANSCRIPTIONAL DUAL REGULATOR HCAR-RELATED"/>
    <property type="match status" value="1"/>
</dbReference>
<dbReference type="Pfam" id="PF00126">
    <property type="entry name" value="HTH_1"/>
    <property type="match status" value="1"/>
</dbReference>
<dbReference type="Pfam" id="PF03466">
    <property type="entry name" value="LysR_substrate"/>
    <property type="match status" value="1"/>
</dbReference>
<dbReference type="PRINTS" id="PR00039">
    <property type="entry name" value="HTHLYSR"/>
</dbReference>
<dbReference type="SUPFAM" id="SSF53850">
    <property type="entry name" value="Periplasmic binding protein-like II"/>
    <property type="match status" value="1"/>
</dbReference>
<dbReference type="SUPFAM" id="SSF46785">
    <property type="entry name" value="Winged helix' DNA-binding domain"/>
    <property type="match status" value="1"/>
</dbReference>
<dbReference type="PROSITE" id="PS50931">
    <property type="entry name" value="HTH_LYSR"/>
    <property type="match status" value="1"/>
</dbReference>
<organism>
    <name type="scientific">Corynebacterium glutamicum (strain R)</name>
    <dbReference type="NCBI Taxonomy" id="340322"/>
    <lineage>
        <taxon>Bacteria</taxon>
        <taxon>Bacillati</taxon>
        <taxon>Actinomycetota</taxon>
        <taxon>Actinomycetes</taxon>
        <taxon>Mycobacteriales</taxon>
        <taxon>Corynebacteriaceae</taxon>
        <taxon>Corynebacterium</taxon>
    </lineage>
</organism>
<sequence length="295" mass="31946">MEIRWLEGFIAVAEELHFSNAAIRLGMPQSPLSQLIRRLESELGQKLFDRSTRSVELTAAGRAFLPHARGIVASAAVAREAVNAAEGEIVGVVRIGFSGVLNYSTLPLLTSEVHKRLPNVELELVGQKLTREAVSLLRLGALDITLMGLPIEDPEIETRLISLEEFCVVLPKDHRLAGEDVVDLVDLAEDGFVTTPEFAGSVFRNSTFQLCAEAGFVPRISQQVNDPYMALLLVGAGVGVAITTHGTGLLAPPNTVHLPIKQHSVELRHGIAWMKGSGRVARDAVIDIALDIFKP</sequence>
<name>SHIR_CORGB</name>